<comment type="function">
    <text evidence="2 3">Major enzyme of the phenylpropanoid pathway that mediates the production of several precursors for numerous metabolites and regulates carbon flow (PubMed:26412334). Catalyzes the formation of CoA thioesters using 4-coumarate, ferulate, caffeate, and cinnamate as substrates (PubMed:26412334, PubMed:8819324). Follows a two-step reaction mechanism, wherein a (hydroxy)cinnamate substrate first undergoes adenylation by ATP leading to an acyl-AMP, followed by a thioesterification in the presence of CoA to yield the final (hydroxy)cinnamoyl-CoA product (PubMed:26412334). Almost inactive toward sinapate (PubMed:26412334, PubMed:8819324).</text>
</comment>
<comment type="catalytic activity">
    <reaction evidence="2 3">
        <text>(E)-4-coumarate + ATP + CoA = (E)-4-coumaroyl-CoA + AMP + diphosphate</text>
        <dbReference type="Rhea" id="RHEA:19641"/>
        <dbReference type="ChEBI" id="CHEBI:12876"/>
        <dbReference type="ChEBI" id="CHEBI:30616"/>
        <dbReference type="ChEBI" id="CHEBI:33019"/>
        <dbReference type="ChEBI" id="CHEBI:57287"/>
        <dbReference type="ChEBI" id="CHEBI:85008"/>
        <dbReference type="ChEBI" id="CHEBI:456215"/>
        <dbReference type="EC" id="6.2.1.12"/>
    </reaction>
    <physiologicalReaction direction="left-to-right" evidence="2 3">
        <dbReference type="Rhea" id="RHEA:19642"/>
    </physiologicalReaction>
</comment>
<comment type="catalytic activity">
    <reaction evidence="2 3">
        <text>(E)-caffeate + ATP + CoA = (E)-caffeoyl-CoA + AMP + diphosphate</text>
        <dbReference type="Rhea" id="RHEA:36299"/>
        <dbReference type="ChEBI" id="CHEBI:30616"/>
        <dbReference type="ChEBI" id="CHEBI:33019"/>
        <dbReference type="ChEBI" id="CHEBI:57287"/>
        <dbReference type="ChEBI" id="CHEBI:57770"/>
        <dbReference type="ChEBI" id="CHEBI:87136"/>
        <dbReference type="ChEBI" id="CHEBI:456215"/>
    </reaction>
    <physiologicalReaction direction="left-to-right" evidence="2 3">
        <dbReference type="Rhea" id="RHEA:36300"/>
    </physiologicalReaction>
</comment>
<comment type="catalytic activity">
    <reaction evidence="2 3">
        <text>(E)-ferulate + ATP + CoA = (E)-feruloyl-CoA + AMP + diphosphate</text>
        <dbReference type="Rhea" id="RHEA:36251"/>
        <dbReference type="ChEBI" id="CHEBI:29749"/>
        <dbReference type="ChEBI" id="CHEBI:30616"/>
        <dbReference type="ChEBI" id="CHEBI:33019"/>
        <dbReference type="ChEBI" id="CHEBI:57287"/>
        <dbReference type="ChEBI" id="CHEBI:87305"/>
        <dbReference type="ChEBI" id="CHEBI:456215"/>
        <dbReference type="EC" id="6.2.1.34"/>
    </reaction>
    <physiologicalReaction direction="left-to-right" evidence="2 3">
        <dbReference type="Rhea" id="RHEA:36252"/>
    </physiologicalReaction>
</comment>
<comment type="catalytic activity">
    <reaction evidence="3">
        <text>(E)-cinnamate + ATP + CoA = (E)-cinnamoyl-CoA + AMP + diphosphate</text>
        <dbReference type="Rhea" id="RHEA:64788"/>
        <dbReference type="ChEBI" id="CHEBI:15669"/>
        <dbReference type="ChEBI" id="CHEBI:30616"/>
        <dbReference type="ChEBI" id="CHEBI:33019"/>
        <dbReference type="ChEBI" id="CHEBI:57252"/>
        <dbReference type="ChEBI" id="CHEBI:57287"/>
        <dbReference type="ChEBI" id="CHEBI:456215"/>
    </reaction>
    <physiologicalReaction direction="left-to-right" evidence="3">
        <dbReference type="Rhea" id="RHEA:64789"/>
    </physiologicalReaction>
</comment>
<comment type="catalytic activity">
    <reaction evidence="2">
        <text>(E)-4-coumarate + ATP + H(+) = (E)-4-coumaroyl-AMP + diphosphate</text>
        <dbReference type="Rhea" id="RHEA:72419"/>
        <dbReference type="ChEBI" id="CHEBI:12876"/>
        <dbReference type="ChEBI" id="CHEBI:15378"/>
        <dbReference type="ChEBI" id="CHEBI:30616"/>
        <dbReference type="ChEBI" id="CHEBI:33019"/>
        <dbReference type="ChEBI" id="CHEBI:192348"/>
    </reaction>
    <physiologicalReaction direction="left-to-right" evidence="2">
        <dbReference type="Rhea" id="RHEA:72420"/>
    </physiologicalReaction>
</comment>
<comment type="catalytic activity">
    <reaction evidence="2">
        <text>(E)-4-coumaroyl-AMP + CoA = (E)-4-coumaroyl-CoA + AMP + H(+)</text>
        <dbReference type="Rhea" id="RHEA:72423"/>
        <dbReference type="ChEBI" id="CHEBI:15378"/>
        <dbReference type="ChEBI" id="CHEBI:57287"/>
        <dbReference type="ChEBI" id="CHEBI:85008"/>
        <dbReference type="ChEBI" id="CHEBI:192348"/>
        <dbReference type="ChEBI" id="CHEBI:456215"/>
    </reaction>
    <physiologicalReaction direction="left-to-right" evidence="2">
        <dbReference type="Rhea" id="RHEA:72424"/>
    </physiologicalReaction>
</comment>
<comment type="catalytic activity">
    <reaction evidence="2">
        <text>(E)-caffeate + ATP + H(+) = (E)-caffeoyl-AMP + diphosphate</text>
        <dbReference type="Rhea" id="RHEA:72431"/>
        <dbReference type="ChEBI" id="CHEBI:15378"/>
        <dbReference type="ChEBI" id="CHEBI:30616"/>
        <dbReference type="ChEBI" id="CHEBI:33019"/>
        <dbReference type="ChEBI" id="CHEBI:57770"/>
        <dbReference type="ChEBI" id="CHEBI:192349"/>
    </reaction>
    <physiologicalReaction direction="left-to-right" evidence="2">
        <dbReference type="Rhea" id="RHEA:72432"/>
    </physiologicalReaction>
</comment>
<comment type="catalytic activity">
    <reaction evidence="2">
        <text>(E)-caffeoyl-AMP + CoA = (E)-caffeoyl-CoA + AMP + H(+)</text>
        <dbReference type="Rhea" id="RHEA:72435"/>
        <dbReference type="ChEBI" id="CHEBI:15378"/>
        <dbReference type="ChEBI" id="CHEBI:57287"/>
        <dbReference type="ChEBI" id="CHEBI:87136"/>
        <dbReference type="ChEBI" id="CHEBI:192349"/>
        <dbReference type="ChEBI" id="CHEBI:456215"/>
    </reaction>
    <physiologicalReaction direction="left-to-right" evidence="2">
        <dbReference type="Rhea" id="RHEA:72436"/>
    </physiologicalReaction>
</comment>
<comment type="catalytic activity">
    <reaction evidence="2">
        <text>(E)-ferulate + ATP + H(+) = (E)-feruloyl-AMP + diphosphate</text>
        <dbReference type="Rhea" id="RHEA:72439"/>
        <dbReference type="ChEBI" id="CHEBI:15378"/>
        <dbReference type="ChEBI" id="CHEBI:29749"/>
        <dbReference type="ChEBI" id="CHEBI:30616"/>
        <dbReference type="ChEBI" id="CHEBI:33019"/>
        <dbReference type="ChEBI" id="CHEBI:192350"/>
    </reaction>
    <physiologicalReaction direction="left-to-right" evidence="2">
        <dbReference type="Rhea" id="RHEA:72440"/>
    </physiologicalReaction>
</comment>
<comment type="catalytic activity">
    <reaction evidence="2">
        <text>(E)-feruloyl-AMP + CoA = (E)-feruloyl-CoA + AMP + H(+)</text>
        <dbReference type="Rhea" id="RHEA:72443"/>
        <dbReference type="ChEBI" id="CHEBI:15378"/>
        <dbReference type="ChEBI" id="CHEBI:57287"/>
        <dbReference type="ChEBI" id="CHEBI:87305"/>
        <dbReference type="ChEBI" id="CHEBI:192350"/>
        <dbReference type="ChEBI" id="CHEBI:456215"/>
    </reaction>
    <physiologicalReaction direction="left-to-right" evidence="2">
        <dbReference type="Rhea" id="RHEA:72444"/>
    </physiologicalReaction>
</comment>
<comment type="cofactor">
    <cofactor evidence="2">
        <name>Mg(2+)</name>
        <dbReference type="ChEBI" id="CHEBI:18420"/>
    </cofactor>
</comment>
<comment type="biophysicochemical properties">
    <kinetics>
        <KM evidence="2">1.5 uM for (E)-4-coumarate</KM>
        <KM evidence="2">1 uM for (E)-caffeate</KM>
        <KM evidence="2">2.9 uM for (E)-ferulate</KM>
        <KM evidence="2">1321.9 uM for (E)-sinapate</KM>
        <text evidence="2">kcat is 3.978 sec(-1) with (E)-4-coumarate as substrate (PubMed:26412334). kcat is 2.652 sec(-1) with (E)-caffeate as substrate (PubMed:26412334). kcat is 3.576 sec(-1) with (E)-ferulate as substrate (PubMed:26412334). kcat is 0.018 sec(-1) with (E)-sinapate as substrate (PubMed:26412334).</text>
    </kinetics>
</comment>
<comment type="pathway">
    <text evidence="6">Phytoalexin biosynthesis; 3,4',5-trihydroxystilbene biosynthesis; 3,4',5-trihydroxystilbene from trans-4-coumarate: step 1/2.</text>
</comment>
<comment type="tissue specificity">
    <text evidence="3">Mainly expressed in old stems and, to a lower extent, in flowers (e.g. in ovary), leaves, young stems, shoot tips and patel limbs.</text>
</comment>
<comment type="developmental stage">
    <text evidence="3">Mostly expressed in old stems (PubMed:8819324). In flowers, higher levels in unpigmented corolla tubes than in pigmented limbs (PubMed:8819324).</text>
</comment>
<comment type="induction">
    <text evidence="3">Induced by wounding and methyl jasmonate (MeJA).</text>
</comment>
<comment type="domain">
    <text evidence="1">Both substrate-binding domains (SBD1 and SBD2) are involved in the substrate recognition, and are sufficient to confer the substrate specificity.</text>
</comment>
<comment type="similarity">
    <text evidence="5">Belongs to the ATP-dependent AMP-binding enzyme family.</text>
</comment>
<proteinExistence type="evidence at protein level"/>
<accession>O24146</accession>
<protein>
    <recommendedName>
        <fullName evidence="4">4-coumarate--CoA ligase 2</fullName>
        <shortName evidence="4">4CL 2</shortName>
        <shortName evidence="4">Nt4CL-19</shortName>
        <shortName evidence="4">Nt4CL-2</shortName>
        <ecNumber evidence="2 3">6.2.1.12</ecNumber>
    </recommendedName>
    <alternativeName>
        <fullName evidence="4">4-coumaroyl-CoA synthase 2</fullName>
    </alternativeName>
    <alternativeName>
        <fullName evidence="7">Caffeate--CoA ligase</fullName>
        <ecNumber evidence="2 3">6.2.1.-</ecNumber>
    </alternativeName>
    <alternativeName>
        <fullName evidence="7">Cinnamate--CoA ligase</fullName>
        <ecNumber evidence="3">6.2.1.-</ecNumber>
    </alternativeName>
    <alternativeName>
        <fullName evidence="7">Ferulate--CoA ligase</fullName>
        <ecNumber evidence="2 3">6.2.1.34</ecNumber>
    </alternativeName>
</protein>
<keyword id="KW-0002">3D-structure</keyword>
<keyword id="KW-0067">ATP-binding</keyword>
<keyword id="KW-0436">Ligase</keyword>
<keyword id="KW-0460">Magnesium</keyword>
<keyword id="KW-0547">Nucleotide-binding</keyword>
<keyword id="KW-0587">Phenylpropanoid metabolism</keyword>
<keyword id="KW-1185">Reference proteome</keyword>
<reference key="1">
    <citation type="journal article" date="1996" name="Plant Physiol.">
        <title>Two divergent members of a tobacco 4-coumarate:coenzyme A ligase (4CL) gene family. cDNA structure, gene inheritance and expression, and properties of recombinant proteins.</title>
        <authorList>
            <person name="Lee D."/>
            <person name="Douglas C.J."/>
        </authorList>
    </citation>
    <scope>NUCLEOTIDE SEQUENCE [MRNA]</scope>
    <scope>FUNCTION</scope>
    <scope>CATALYTIC ACTIVITY</scope>
    <scope>TISSUE SPECIFICITY</scope>
    <scope>DEVELOPMENTAL STAGE</scope>
    <scope>INDUCTION BY WOUNDING AND JASMONIC ACID</scope>
    <source>
        <strain>cv. Xanthi SRl</strain>
    </source>
</reference>
<reference key="2">
    <citation type="journal article" date="2015" name="Structure">
        <title>Structural basis for specificity and flexibility in a plant 4-coumarate:CoA ligase.</title>
        <authorList>
            <person name="Li Z."/>
            <person name="Nair S.K."/>
        </authorList>
    </citation>
    <scope>X-RAY CRYSTALLOGRAPHY (1.50 ANGSTROMS) OF WILD-TYPE AND DELETION MUTANT VAL-341 IN COMPLEXES WITH MAGNESIUM; 4-COUMAROYL-AMP; CAFFEOYL-AMP; FERULOYL-AMP; AMP; ATP AND COA</scope>
    <scope>FUNCTION</scope>
    <scope>MUTAGENESIS OF THR-193; LYS-197; HIS-237; TYR-239; THR-336; VAL-341; MET-344; ARG-435; LYS-441; LYS-443 AND LYS-526</scope>
    <scope>BIOPHYSICOCHEMICAL PROPERTIES</scope>
    <scope>CATALYTIC ACTIVITY</scope>
    <scope>PATHWAY</scope>
    <scope>COFACTOR</scope>
</reference>
<reference key="3">
    <citation type="submission" date="2016-12" db="PDB data bank">
        <title>Structure of the open conformation of 4-coumarate-CoA ligase from Nicotiana tabacum.</title>
        <authorList>
            <person name="Morioka W.P."/>
            <person name="Bianchetti C.M."/>
        </authorList>
    </citation>
    <scope>X-RAY CRYSTALLOGRAPHY (2.25 ANGSTROMS)</scope>
</reference>
<gene>
    <name evidence="4" type="primary">4CL2</name>
</gene>
<feature type="chain" id="PRO_0000193041" description="4-coumarate--CoA ligase 2">
    <location>
        <begin position="1"/>
        <end position="542"/>
    </location>
</feature>
<feature type="region of interest" description="SBD1" evidence="1">
    <location>
        <begin position="262"/>
        <end position="331"/>
    </location>
</feature>
<feature type="region of interest" description="SBD2" evidence="1">
    <location>
        <begin position="332"/>
        <end position="399"/>
    </location>
</feature>
<feature type="binding site" evidence="2 8">
    <location>
        <position position="189"/>
    </location>
    <ligand>
        <name>ATP</name>
        <dbReference type="ChEBI" id="CHEBI:30616"/>
    </ligand>
</feature>
<feature type="binding site" evidence="2 8">
    <location>
        <position position="190"/>
    </location>
    <ligand>
        <name>ATP</name>
        <dbReference type="ChEBI" id="CHEBI:30616"/>
    </ligand>
</feature>
<feature type="binding site" evidence="2 8">
    <location>
        <position position="191"/>
    </location>
    <ligand>
        <name>ATP</name>
        <dbReference type="ChEBI" id="CHEBI:30616"/>
    </ligand>
</feature>
<feature type="binding site" evidence="2 8">
    <location>
        <position position="192"/>
    </location>
    <ligand>
        <name>ATP</name>
        <dbReference type="ChEBI" id="CHEBI:30616"/>
    </ligand>
</feature>
<feature type="binding site" evidence="2 8">
    <location>
        <position position="193"/>
    </location>
    <ligand>
        <name>ATP</name>
        <dbReference type="ChEBI" id="CHEBI:30616"/>
    </ligand>
</feature>
<feature type="binding site" evidence="2 8">
    <location>
        <position position="197"/>
    </location>
    <ligand>
        <name>ATP</name>
        <dbReference type="ChEBI" id="CHEBI:30616"/>
    </ligand>
</feature>
<feature type="binding site" evidence="2 10">
    <location>
        <position position="239"/>
    </location>
    <ligand>
        <name>(E)-4-coumaroyl-AMP</name>
        <dbReference type="ChEBI" id="CHEBI:192348"/>
    </ligand>
</feature>
<feature type="binding site" evidence="2 11">
    <location>
        <position position="239"/>
    </location>
    <ligand>
        <name>(E)-caffeoyl-AMP</name>
        <dbReference type="ChEBI" id="CHEBI:192349"/>
    </ligand>
</feature>
<feature type="binding site" evidence="2 12">
    <location>
        <position position="239"/>
    </location>
    <ligand>
        <name>(E)-feruloyl-AMP</name>
        <dbReference type="ChEBI" id="CHEBI:192350"/>
    </ligand>
</feature>
<feature type="binding site" evidence="2 10">
    <location>
        <position position="243"/>
    </location>
    <ligand>
        <name>(E)-4-coumaroyl-AMP</name>
        <dbReference type="ChEBI" id="CHEBI:192348"/>
    </ligand>
</feature>
<feature type="binding site" evidence="2 11">
    <location>
        <position position="243"/>
    </location>
    <ligand>
        <name>(E)-caffeoyl-AMP</name>
        <dbReference type="ChEBI" id="CHEBI:192349"/>
    </ligand>
</feature>
<feature type="binding site" evidence="2 12">
    <location>
        <position position="243"/>
    </location>
    <ligand>
        <name>(E)-feruloyl-AMP</name>
        <dbReference type="ChEBI" id="CHEBI:192350"/>
    </ligand>
</feature>
<feature type="binding site" evidence="2 9">
    <location>
        <position position="260"/>
    </location>
    <ligand>
        <name>CoA</name>
        <dbReference type="ChEBI" id="CHEBI:57287"/>
    </ligand>
</feature>
<feature type="binding site" evidence="2 10">
    <location>
        <position position="309"/>
    </location>
    <ligand>
        <name>(E)-4-coumaroyl-AMP</name>
        <dbReference type="ChEBI" id="CHEBI:192348"/>
    </ligand>
</feature>
<feature type="binding site" evidence="2 11">
    <location>
        <position position="309"/>
    </location>
    <ligand>
        <name>(E)-caffeoyl-AMP</name>
        <dbReference type="ChEBI" id="CHEBI:192349"/>
    </ligand>
</feature>
<feature type="binding site" evidence="2 12">
    <location>
        <position position="309"/>
    </location>
    <ligand>
        <name>(E)-feruloyl-AMP</name>
        <dbReference type="ChEBI" id="CHEBI:192350"/>
    </ligand>
</feature>
<feature type="binding site" evidence="2 8">
    <location>
        <position position="331"/>
    </location>
    <ligand>
        <name>ATP</name>
        <dbReference type="ChEBI" id="CHEBI:30616"/>
    </ligand>
</feature>
<feature type="binding site" evidence="2 10">
    <location>
        <position position="332"/>
    </location>
    <ligand>
        <name>(E)-4-coumaroyl-AMP</name>
        <dbReference type="ChEBI" id="CHEBI:192348"/>
    </ligand>
</feature>
<feature type="binding site" evidence="2 11">
    <location>
        <position position="332"/>
    </location>
    <ligand>
        <name>(E)-caffeoyl-AMP</name>
        <dbReference type="ChEBI" id="CHEBI:192349"/>
    </ligand>
</feature>
<feature type="binding site" evidence="2 12">
    <location>
        <position position="332"/>
    </location>
    <ligand>
        <name>(E)-feruloyl-AMP</name>
        <dbReference type="ChEBI" id="CHEBI:192350"/>
    </ligand>
</feature>
<feature type="binding site" evidence="2 9">
    <location>
        <position position="332"/>
    </location>
    <ligand>
        <name>AMP</name>
        <dbReference type="ChEBI" id="CHEBI:456215"/>
    </ligand>
</feature>
<feature type="binding site" evidence="2 8">
    <location>
        <position position="332"/>
    </location>
    <ligand>
        <name>ATP</name>
        <dbReference type="ChEBI" id="CHEBI:30616"/>
    </ligand>
</feature>
<feature type="binding site" evidence="2 10">
    <location>
        <position position="336"/>
    </location>
    <ligand>
        <name>(E)-4-coumaroyl-AMP</name>
        <dbReference type="ChEBI" id="CHEBI:192348"/>
    </ligand>
</feature>
<feature type="binding site" evidence="2 11">
    <location>
        <position position="336"/>
    </location>
    <ligand>
        <name>(E)-caffeoyl-AMP</name>
        <dbReference type="ChEBI" id="CHEBI:192349"/>
    </ligand>
</feature>
<feature type="binding site" evidence="2 12">
    <location>
        <position position="336"/>
    </location>
    <ligand>
        <name>(E)-feruloyl-AMP</name>
        <dbReference type="ChEBI" id="CHEBI:192350"/>
    </ligand>
</feature>
<feature type="binding site" evidence="2 9">
    <location>
        <position position="336"/>
    </location>
    <ligand>
        <name>AMP</name>
        <dbReference type="ChEBI" id="CHEBI:456215"/>
    </ligand>
</feature>
<feature type="binding site" evidence="2 8">
    <location>
        <position position="336"/>
    </location>
    <ligand>
        <name>ATP</name>
        <dbReference type="ChEBI" id="CHEBI:30616"/>
    </ligand>
</feature>
<feature type="binding site" evidence="2">
    <location>
        <position position="344"/>
    </location>
    <ligand>
        <name>(E)-4-coumaroyl-AMP</name>
        <dbReference type="ChEBI" id="CHEBI:192348"/>
    </ligand>
</feature>
<feature type="binding site" evidence="2">
    <location>
        <position position="344"/>
    </location>
    <ligand>
        <name>(E)-caffeoyl-AMP</name>
        <dbReference type="ChEBI" id="CHEBI:192349"/>
    </ligand>
</feature>
<feature type="binding site" evidence="2">
    <location>
        <position position="344"/>
    </location>
    <ligand>
        <name>(E)-feruloyl-AMP</name>
        <dbReference type="ChEBI" id="CHEBI:192350"/>
    </ligand>
</feature>
<feature type="binding site" evidence="2 10">
    <location>
        <position position="420"/>
    </location>
    <ligand>
        <name>(E)-4-coumaroyl-AMP</name>
        <dbReference type="ChEBI" id="CHEBI:192348"/>
    </ligand>
</feature>
<feature type="binding site" evidence="2 11">
    <location>
        <position position="420"/>
    </location>
    <ligand>
        <name>(E)-caffeoyl-AMP</name>
        <dbReference type="ChEBI" id="CHEBI:192349"/>
    </ligand>
</feature>
<feature type="binding site" evidence="2 12">
    <location>
        <position position="420"/>
    </location>
    <ligand>
        <name>(E)-feruloyl-AMP</name>
        <dbReference type="ChEBI" id="CHEBI:192350"/>
    </ligand>
</feature>
<feature type="binding site" evidence="2 9">
    <location>
        <position position="420"/>
    </location>
    <ligand>
        <name>AMP</name>
        <dbReference type="ChEBI" id="CHEBI:456215"/>
    </ligand>
</feature>
<feature type="binding site" evidence="2 8">
    <location>
        <position position="420"/>
    </location>
    <ligand>
        <name>ATP</name>
        <dbReference type="ChEBI" id="CHEBI:30616"/>
    </ligand>
</feature>
<feature type="binding site" evidence="2 10">
    <location>
        <position position="435"/>
    </location>
    <ligand>
        <name>(E)-4-coumaroyl-AMP</name>
        <dbReference type="ChEBI" id="CHEBI:192348"/>
    </ligand>
</feature>
<feature type="binding site" evidence="2 11">
    <location>
        <position position="435"/>
    </location>
    <ligand>
        <name>(E)-caffeoyl-AMP</name>
        <dbReference type="ChEBI" id="CHEBI:192349"/>
    </ligand>
</feature>
<feature type="binding site" evidence="2 12">
    <location>
        <position position="435"/>
    </location>
    <ligand>
        <name>(E)-feruloyl-AMP</name>
        <dbReference type="ChEBI" id="CHEBI:192350"/>
    </ligand>
</feature>
<feature type="binding site" evidence="2 8">
    <location>
        <position position="435"/>
    </location>
    <ligand>
        <name>ATP</name>
        <dbReference type="ChEBI" id="CHEBI:30616"/>
    </ligand>
</feature>
<feature type="binding site" evidence="2 10">
    <location>
        <position position="437"/>
    </location>
    <ligand>
        <name>(E)-4-coumaroyl-AMP</name>
        <dbReference type="ChEBI" id="CHEBI:192348"/>
    </ligand>
</feature>
<feature type="binding site" evidence="2 11">
    <location>
        <position position="437"/>
    </location>
    <ligand>
        <name>(E)-caffeoyl-AMP</name>
        <dbReference type="ChEBI" id="CHEBI:192349"/>
    </ligand>
</feature>
<feature type="binding site" evidence="2 12">
    <location>
        <position position="437"/>
    </location>
    <ligand>
        <name>(E)-feruloyl-AMP</name>
        <dbReference type="ChEBI" id="CHEBI:192350"/>
    </ligand>
</feature>
<feature type="binding site" evidence="2 9">
    <location>
        <position position="437"/>
    </location>
    <ligand>
        <name>AMP</name>
        <dbReference type="ChEBI" id="CHEBI:456215"/>
    </ligand>
</feature>
<feature type="binding site" evidence="2 10">
    <location>
        <position position="441"/>
    </location>
    <ligand>
        <name>(E)-4-coumaroyl-AMP</name>
        <dbReference type="ChEBI" id="CHEBI:192348"/>
    </ligand>
</feature>
<feature type="binding site" evidence="2 11">
    <location>
        <position position="441"/>
    </location>
    <ligand>
        <name>(E)-caffeoyl-AMP</name>
        <dbReference type="ChEBI" id="CHEBI:192349"/>
    </ligand>
</feature>
<feature type="binding site" evidence="2 12">
    <location>
        <position position="441"/>
    </location>
    <ligand>
        <name>(E)-feruloyl-AMP</name>
        <dbReference type="ChEBI" id="CHEBI:192350"/>
    </ligand>
</feature>
<feature type="binding site" evidence="2 9">
    <location>
        <position position="441"/>
    </location>
    <ligand>
        <name>AMP</name>
        <dbReference type="ChEBI" id="CHEBI:456215"/>
    </ligand>
</feature>
<feature type="binding site" evidence="2 9">
    <location>
        <position position="443"/>
    </location>
    <ligand>
        <name>CoA</name>
        <dbReference type="ChEBI" id="CHEBI:57287"/>
    </ligand>
</feature>
<feature type="binding site" evidence="2 9">
    <location>
        <position position="444"/>
    </location>
    <ligand>
        <name>CoA</name>
        <dbReference type="ChEBI" id="CHEBI:57287"/>
    </ligand>
</feature>
<feature type="binding site" evidence="2 9">
    <location>
        <position position="446"/>
    </location>
    <ligand>
        <name>AMP</name>
        <dbReference type="ChEBI" id="CHEBI:456215"/>
    </ligand>
</feature>
<feature type="binding site" evidence="2 8">
    <location>
        <position position="526"/>
    </location>
    <ligand>
        <name>ATP</name>
        <dbReference type="ChEBI" id="CHEBI:30616"/>
    </ligand>
</feature>
<feature type="mutagenesis site" description="Reduced activity against 4-coumarate." evidence="2">
    <original>T</original>
    <variation>A</variation>
    <location>
        <position position="193"/>
    </location>
</feature>
<feature type="mutagenesis site" description="Reduced activity against 4-coumarate." evidence="2">
    <original>K</original>
    <variation>A</variation>
    <location>
        <position position="197"/>
    </location>
</feature>
<feature type="mutagenesis site" description="Strongly reduced activity against 4-coumarate." evidence="2">
    <original>H</original>
    <variation>A</variation>
    <location>
        <position position="237"/>
    </location>
</feature>
<feature type="mutagenesis site" description="Strongly reduced activity against 4-coumarate." evidence="2">
    <original>Y</original>
    <variation>A</variation>
    <location>
        <position position="239"/>
    </location>
</feature>
<feature type="mutagenesis site" description="Reduced activity against 4-coumarate." evidence="2">
    <original>Y</original>
    <variation>F</variation>
    <location>
        <position position="239"/>
    </location>
</feature>
<feature type="mutagenesis site" description="Strongly reduced activity against 4-coumarate." evidence="2">
    <original>T</original>
    <variation>A</variation>
    <location>
        <position position="336"/>
    </location>
</feature>
<feature type="mutagenesis site" description="Reduced activity against 4-coumarate." evidence="2">
    <original>V</original>
    <variation>G</variation>
    <location>
        <position position="341"/>
    </location>
</feature>
<feature type="mutagenesis site" description="Reduced activity against 4-coumarate, but acquired ability to use sinapate as substrate." evidence="2">
    <location>
        <position position="341"/>
    </location>
</feature>
<feature type="mutagenesis site" description="Reduced activity against 4-coumarate." evidence="2">
    <original>M</original>
    <variation>A</variation>
    <location>
        <position position="344"/>
    </location>
</feature>
<feature type="mutagenesis site" description="Strongly reduced activity against 4-coumarate." evidence="2">
    <original>R</original>
    <variation>A</variation>
    <location>
        <position position="435"/>
    </location>
</feature>
<feature type="mutagenesis site" description="Abolished activity against 4-coumarate." evidence="2">
    <original>K</original>
    <variation>A</variation>
    <location>
        <position position="441"/>
    </location>
</feature>
<feature type="mutagenesis site" description="Normal activity against 4-coumarate." evidence="2">
    <original>K</original>
    <variation>A</variation>
    <location>
        <position position="443"/>
    </location>
</feature>
<feature type="mutagenesis site" description="Abolished activity against 4-coumarate." evidence="2">
    <original>K</original>
    <variation>A</variation>
    <location>
        <position position="526"/>
    </location>
</feature>
<feature type="helix" evidence="13">
    <location>
        <begin position="27"/>
        <end position="31"/>
    </location>
</feature>
<feature type="turn" evidence="13">
    <location>
        <begin position="32"/>
        <end position="34"/>
    </location>
</feature>
<feature type="helix" evidence="13">
    <location>
        <begin position="35"/>
        <end position="37"/>
    </location>
</feature>
<feature type="turn" evidence="13">
    <location>
        <begin position="38"/>
        <end position="40"/>
    </location>
</feature>
<feature type="strand" evidence="13">
    <location>
        <begin position="41"/>
        <end position="46"/>
    </location>
</feature>
<feature type="turn" evidence="13">
    <location>
        <begin position="47"/>
        <end position="49"/>
    </location>
</feature>
<feature type="strand" evidence="13">
    <location>
        <begin position="52"/>
        <end position="54"/>
    </location>
</feature>
<feature type="helix" evidence="13">
    <location>
        <begin position="55"/>
        <end position="71"/>
    </location>
</feature>
<feature type="strand" evidence="13">
    <location>
        <begin position="79"/>
        <end position="82"/>
    </location>
</feature>
<feature type="helix" evidence="13">
    <location>
        <begin position="88"/>
        <end position="99"/>
    </location>
</feature>
<feature type="strand" evidence="13">
    <location>
        <begin position="103"/>
        <end position="106"/>
    </location>
</feature>
<feature type="helix" evidence="13">
    <location>
        <begin position="113"/>
        <end position="123"/>
    </location>
</feature>
<feature type="strand" evidence="13">
    <location>
        <begin position="126"/>
        <end position="130"/>
    </location>
</feature>
<feature type="helix" evidence="13">
    <location>
        <begin position="132"/>
        <end position="137"/>
    </location>
</feature>
<feature type="helix" evidence="13">
    <location>
        <begin position="139"/>
        <end position="144"/>
    </location>
</feature>
<feature type="strand" evidence="13">
    <location>
        <begin position="148"/>
        <end position="153"/>
    </location>
</feature>
<feature type="helix" evidence="13">
    <location>
        <begin position="163"/>
        <end position="166"/>
    </location>
</feature>
<feature type="helix" evidence="13">
    <location>
        <begin position="170"/>
        <end position="172"/>
    </location>
</feature>
<feature type="strand" evidence="13">
    <location>
        <begin position="183"/>
        <end position="185"/>
    </location>
</feature>
<feature type="strand" evidence="13">
    <location>
        <begin position="193"/>
        <end position="195"/>
    </location>
</feature>
<feature type="strand" evidence="13">
    <location>
        <begin position="197"/>
        <end position="202"/>
    </location>
</feature>
<feature type="helix" evidence="13">
    <location>
        <begin position="203"/>
        <end position="214"/>
    </location>
</feature>
<feature type="strand" evidence="13">
    <location>
        <begin position="216"/>
        <end position="218"/>
    </location>
</feature>
<feature type="strand" evidence="13">
    <location>
        <begin position="228"/>
        <end position="231"/>
    </location>
</feature>
<feature type="helix" evidence="13">
    <location>
        <begin position="238"/>
        <end position="243"/>
    </location>
</feature>
<feature type="helix" evidence="13">
    <location>
        <begin position="245"/>
        <end position="251"/>
    </location>
</feature>
<feature type="strand" evidence="13">
    <location>
        <begin position="254"/>
        <end position="257"/>
    </location>
</feature>
<feature type="helix" evidence="13">
    <location>
        <begin position="263"/>
        <end position="273"/>
    </location>
</feature>
<feature type="strand" evidence="13">
    <location>
        <begin position="277"/>
        <end position="280"/>
    </location>
</feature>
<feature type="helix" evidence="13">
    <location>
        <begin position="282"/>
        <end position="289"/>
    </location>
</feature>
<feature type="helix" evidence="13">
    <location>
        <begin position="292"/>
        <end position="296"/>
    </location>
</feature>
<feature type="strand" evidence="13">
    <location>
        <begin position="304"/>
        <end position="307"/>
    </location>
</feature>
<feature type="helix" evidence="13">
    <location>
        <begin position="314"/>
        <end position="323"/>
    </location>
</feature>
<feature type="strand" evidence="13">
    <location>
        <begin position="328"/>
        <end position="331"/>
    </location>
</feature>
<feature type="strand" evidence="15">
    <location>
        <begin position="333"/>
        <end position="335"/>
    </location>
</feature>
<feature type="helix" evidence="13">
    <location>
        <begin position="336"/>
        <end position="338"/>
    </location>
</feature>
<feature type="strand" evidence="13">
    <location>
        <begin position="339"/>
        <end position="344"/>
    </location>
</feature>
<feature type="helix" evidence="13">
    <location>
        <begin position="346"/>
        <end position="348"/>
    </location>
</feature>
<feature type="strand" evidence="13">
    <location>
        <begin position="349"/>
        <end position="351"/>
    </location>
</feature>
<feature type="strand" evidence="14">
    <location>
        <begin position="361"/>
        <end position="363"/>
    </location>
</feature>
<feature type="strand" evidence="13">
    <location>
        <begin position="368"/>
        <end position="372"/>
    </location>
</feature>
<feature type="turn" evidence="13">
    <location>
        <begin position="374"/>
        <end position="376"/>
    </location>
</feature>
<feature type="strand" evidence="13">
    <location>
        <begin position="386"/>
        <end position="392"/>
    </location>
</feature>
<feature type="strand" evidence="13">
    <location>
        <begin position="397"/>
        <end position="399"/>
    </location>
</feature>
<feature type="helix" evidence="13">
    <location>
        <begin position="403"/>
        <end position="409"/>
    </location>
</feature>
<feature type="strand" evidence="13">
    <location>
        <begin position="416"/>
        <end position="424"/>
    </location>
</feature>
<feature type="strand" evidence="13">
    <location>
        <begin position="430"/>
        <end position="435"/>
    </location>
</feature>
<feature type="helix" evidence="15">
    <location>
        <begin position="436"/>
        <end position="438"/>
    </location>
</feature>
<feature type="strand" evidence="13">
    <location>
        <begin position="440"/>
        <end position="442"/>
    </location>
</feature>
<feature type="strand" evidence="13">
    <location>
        <begin position="445"/>
        <end position="447"/>
    </location>
</feature>
<feature type="helix" evidence="13">
    <location>
        <begin position="449"/>
        <end position="457"/>
    </location>
</feature>
<feature type="strand" evidence="13">
    <location>
        <begin position="462"/>
        <end position="472"/>
    </location>
</feature>
<feature type="turn" evidence="13">
    <location>
        <begin position="473"/>
        <end position="475"/>
    </location>
</feature>
<feature type="strand" evidence="13">
    <location>
        <begin position="476"/>
        <end position="485"/>
    </location>
</feature>
<feature type="helix" evidence="13">
    <location>
        <begin position="493"/>
        <end position="501"/>
    </location>
</feature>
<feature type="helix" evidence="13">
    <location>
        <begin position="506"/>
        <end position="508"/>
    </location>
</feature>
<feature type="strand" evidence="13">
    <location>
        <begin position="512"/>
        <end position="515"/>
    </location>
</feature>
<feature type="strand" evidence="16">
    <location>
        <begin position="523"/>
        <end position="525"/>
    </location>
</feature>
<feature type="helix" evidence="13">
    <location>
        <begin position="529"/>
        <end position="535"/>
    </location>
</feature>
<sequence>MEKDTKQVDIIFRSKLPDIYIPNHLPLHSYCFENISEFSSRPCLINGANKQIYTYADVELNSRKVAAGLHKQGIQPKDTIMILLPNSPEFVFAFIGASYLGAISTMANPLFTPAEVVKQAKASSAKIIVTQACHVNKVKDYAFENDVKIICIDSAPEGCLHFSVLTQANEHDIPEVEIQPDDVVALPYSSGTTGLPKGVMLTHKGLVTSVAQQVDGENPNLYIHSEDVMLCVLPLFHIYSLNSVLLCGLRVGAAILIMQKFDIVSFLELIQRYKVTIGPFVPPIVLAIAKSPMVDDYDLSSVRTVMSGAAPLGKELEDTVRAKFPNAKLGQGYGMTEAGPVLAMCLAFAKEPFEIKSGACGTVVRNAEMKIVDPKTGNSLPRNQSGEICIRGDQIMKGYLNDPEATARTIDKEGWLYTGDIGYIDDDDELFIVDRLKELIKYKGFQVAPAELEALLLNHPNISDAAVVPMKDEQAGEVPVAFVVRSNGSTITEDEVKDFISKQVIFYKRIKRVFFVDAIPKSPSGKILRKDLRAKLAAGLPN</sequence>
<evidence type="ECO:0000250" key="1">
    <source>
        <dbReference type="UniProtKB" id="Q42524"/>
    </source>
</evidence>
<evidence type="ECO:0000269" key="2">
    <source>
    </source>
</evidence>
<evidence type="ECO:0000269" key="3">
    <source>
    </source>
</evidence>
<evidence type="ECO:0000303" key="4">
    <source>
    </source>
</evidence>
<evidence type="ECO:0000305" key="5"/>
<evidence type="ECO:0000305" key="6">
    <source>
    </source>
</evidence>
<evidence type="ECO:0000305" key="7">
    <source>
    </source>
</evidence>
<evidence type="ECO:0007744" key="8">
    <source>
        <dbReference type="PDB" id="5BSM"/>
    </source>
</evidence>
<evidence type="ECO:0007744" key="9">
    <source>
        <dbReference type="PDB" id="5BSR"/>
    </source>
</evidence>
<evidence type="ECO:0007744" key="10">
    <source>
        <dbReference type="PDB" id="5BST"/>
    </source>
</evidence>
<evidence type="ECO:0007744" key="11">
    <source>
        <dbReference type="PDB" id="5BSU"/>
    </source>
</evidence>
<evidence type="ECO:0007744" key="12">
    <source>
        <dbReference type="PDB" id="5BSV"/>
    </source>
</evidence>
<evidence type="ECO:0007829" key="13">
    <source>
        <dbReference type="PDB" id="5BSR"/>
    </source>
</evidence>
<evidence type="ECO:0007829" key="14">
    <source>
        <dbReference type="PDB" id="5BSU"/>
    </source>
</evidence>
<evidence type="ECO:0007829" key="15">
    <source>
        <dbReference type="PDB" id="5BSW"/>
    </source>
</evidence>
<evidence type="ECO:0007829" key="16">
    <source>
        <dbReference type="PDB" id="5U95"/>
    </source>
</evidence>
<organism>
    <name type="scientific">Nicotiana tabacum</name>
    <name type="common">Common tobacco</name>
    <dbReference type="NCBI Taxonomy" id="4097"/>
    <lineage>
        <taxon>Eukaryota</taxon>
        <taxon>Viridiplantae</taxon>
        <taxon>Streptophyta</taxon>
        <taxon>Embryophyta</taxon>
        <taxon>Tracheophyta</taxon>
        <taxon>Spermatophyta</taxon>
        <taxon>Magnoliopsida</taxon>
        <taxon>eudicotyledons</taxon>
        <taxon>Gunneridae</taxon>
        <taxon>Pentapetalae</taxon>
        <taxon>asterids</taxon>
        <taxon>lamiids</taxon>
        <taxon>Solanales</taxon>
        <taxon>Solanaceae</taxon>
        <taxon>Nicotianoideae</taxon>
        <taxon>Nicotianeae</taxon>
        <taxon>Nicotiana</taxon>
    </lineage>
</organism>
<dbReference type="EC" id="6.2.1.12" evidence="2 3"/>
<dbReference type="EC" id="6.2.1.-" evidence="2 3"/>
<dbReference type="EC" id="6.2.1.34" evidence="2 3"/>
<dbReference type="EMBL" id="U50846">
    <property type="protein sequence ID" value="AAB18638.1"/>
    <property type="molecule type" value="mRNA"/>
</dbReference>
<dbReference type="PIR" id="T03789">
    <property type="entry name" value="T03789"/>
</dbReference>
<dbReference type="RefSeq" id="NP_001312554.1">
    <property type="nucleotide sequence ID" value="NM_001325625.1"/>
</dbReference>
<dbReference type="PDB" id="5BSM">
    <property type="method" value="X-ray"/>
    <property type="resolution" value="2.32 A"/>
    <property type="chains" value="A/B=1-542"/>
</dbReference>
<dbReference type="PDB" id="5BSR">
    <property type="method" value="X-ray"/>
    <property type="resolution" value="1.50 A"/>
    <property type="chains" value="A=1-542"/>
</dbReference>
<dbReference type="PDB" id="5BST">
    <property type="method" value="X-ray"/>
    <property type="resolution" value="1.61 A"/>
    <property type="chains" value="A=1-542"/>
</dbReference>
<dbReference type="PDB" id="5BSU">
    <property type="method" value="X-ray"/>
    <property type="resolution" value="1.75 A"/>
    <property type="chains" value="A=1-542"/>
</dbReference>
<dbReference type="PDB" id="5BSV">
    <property type="method" value="X-ray"/>
    <property type="resolution" value="1.70 A"/>
    <property type="chains" value="A=1-542"/>
</dbReference>
<dbReference type="PDB" id="5BSW">
    <property type="method" value="X-ray"/>
    <property type="resolution" value="2.10 A"/>
    <property type="chains" value="A/B=1-542"/>
</dbReference>
<dbReference type="PDB" id="5U95">
    <property type="method" value="X-ray"/>
    <property type="resolution" value="2.25 A"/>
    <property type="chains" value="A/B/C/D=1-542"/>
</dbReference>
<dbReference type="PDBsum" id="5BSM"/>
<dbReference type="PDBsum" id="5BSR"/>
<dbReference type="PDBsum" id="5BST"/>
<dbReference type="PDBsum" id="5BSU"/>
<dbReference type="PDBsum" id="5BSV"/>
<dbReference type="PDBsum" id="5BSW"/>
<dbReference type="PDBsum" id="5U95"/>
<dbReference type="SMR" id="O24146"/>
<dbReference type="STRING" id="4097.O24146"/>
<dbReference type="PaxDb" id="4097-O24146"/>
<dbReference type="GeneID" id="107797004"/>
<dbReference type="KEGG" id="nta:107797004"/>
<dbReference type="OrthoDB" id="10253869at2759"/>
<dbReference type="BRENDA" id="6.2.1.12">
    <property type="organism ID" value="3645"/>
</dbReference>
<dbReference type="UniPathway" id="UPA00372">
    <property type="reaction ID" value="UER00547"/>
</dbReference>
<dbReference type="EvolutionaryTrace" id="O24146"/>
<dbReference type="Proteomes" id="UP000084051">
    <property type="component" value="Unplaced"/>
</dbReference>
<dbReference type="GO" id="GO:0106286">
    <property type="term" value="F:(E)-caffeate-CoA ligase activity"/>
    <property type="evidence" value="ECO:0000314"/>
    <property type="project" value="UniProtKB"/>
</dbReference>
<dbReference type="GO" id="GO:0016207">
    <property type="term" value="F:4-coumarate-CoA ligase activity"/>
    <property type="evidence" value="ECO:0000314"/>
    <property type="project" value="UniProtKB"/>
</dbReference>
<dbReference type="GO" id="GO:0005524">
    <property type="term" value="F:ATP binding"/>
    <property type="evidence" value="ECO:0007669"/>
    <property type="project" value="UniProtKB-KW"/>
</dbReference>
<dbReference type="GO" id="GO:0016405">
    <property type="term" value="F:CoA-ligase activity"/>
    <property type="evidence" value="ECO:0000318"/>
    <property type="project" value="GO_Central"/>
</dbReference>
<dbReference type="GO" id="GO:0106290">
    <property type="term" value="F:trans-cinnamate-CoA ligase activity"/>
    <property type="evidence" value="ECO:0000314"/>
    <property type="project" value="UniProtKB"/>
</dbReference>
<dbReference type="GO" id="GO:0050563">
    <property type="term" value="F:trans-feruloyl-CoA synthase activity"/>
    <property type="evidence" value="ECO:0000314"/>
    <property type="project" value="UniProtKB"/>
</dbReference>
<dbReference type="GO" id="GO:0009698">
    <property type="term" value="P:phenylpropanoid metabolic process"/>
    <property type="evidence" value="ECO:0000314"/>
    <property type="project" value="UniProtKB"/>
</dbReference>
<dbReference type="GO" id="GO:0009753">
    <property type="term" value="P:response to jasmonic acid"/>
    <property type="evidence" value="ECO:0000270"/>
    <property type="project" value="UniProtKB"/>
</dbReference>
<dbReference type="GO" id="GO:0009611">
    <property type="term" value="P:response to wounding"/>
    <property type="evidence" value="ECO:0000270"/>
    <property type="project" value="UniProtKB"/>
</dbReference>
<dbReference type="CDD" id="cd05904">
    <property type="entry name" value="4CL"/>
    <property type="match status" value="1"/>
</dbReference>
<dbReference type="FunFam" id="3.30.300.30:FF:000007">
    <property type="entry name" value="4-coumarate--CoA ligase 2"/>
    <property type="match status" value="1"/>
</dbReference>
<dbReference type="FunFam" id="3.40.50.12780:FF:000003">
    <property type="entry name" value="Long-chain-fatty-acid--CoA ligase FadD"/>
    <property type="match status" value="1"/>
</dbReference>
<dbReference type="Gene3D" id="3.30.300.30">
    <property type="match status" value="1"/>
</dbReference>
<dbReference type="Gene3D" id="3.40.50.12780">
    <property type="entry name" value="N-terminal domain of ligase-like"/>
    <property type="match status" value="1"/>
</dbReference>
<dbReference type="InterPro" id="IPR025110">
    <property type="entry name" value="AMP-bd_C"/>
</dbReference>
<dbReference type="InterPro" id="IPR045851">
    <property type="entry name" value="AMP-bd_C_sf"/>
</dbReference>
<dbReference type="InterPro" id="IPR020845">
    <property type="entry name" value="AMP-binding_CS"/>
</dbReference>
<dbReference type="InterPro" id="IPR000873">
    <property type="entry name" value="AMP-dep_synth/lig_dom"/>
</dbReference>
<dbReference type="InterPro" id="IPR042099">
    <property type="entry name" value="ANL_N_sf"/>
</dbReference>
<dbReference type="PANTHER" id="PTHR24096:SF406">
    <property type="entry name" value="4-COUMARATE--COA LIGASE 2"/>
    <property type="match status" value="1"/>
</dbReference>
<dbReference type="PANTHER" id="PTHR24096">
    <property type="entry name" value="LONG-CHAIN-FATTY-ACID--COA LIGASE"/>
    <property type="match status" value="1"/>
</dbReference>
<dbReference type="Pfam" id="PF00501">
    <property type="entry name" value="AMP-binding"/>
    <property type="match status" value="1"/>
</dbReference>
<dbReference type="Pfam" id="PF13193">
    <property type="entry name" value="AMP-binding_C"/>
    <property type="match status" value="1"/>
</dbReference>
<dbReference type="SUPFAM" id="SSF56801">
    <property type="entry name" value="Acetyl-CoA synthetase-like"/>
    <property type="match status" value="1"/>
</dbReference>
<dbReference type="PROSITE" id="PS00455">
    <property type="entry name" value="AMP_BINDING"/>
    <property type="match status" value="1"/>
</dbReference>
<name>4CL2_TOBAC</name>